<reference key="1">
    <citation type="journal article" date="2009" name="Physiol. Plantarum">
        <title>The presence of sinapyl lignin in Ginkgo biloba cell cultures changes our views of the evolution of lignin biosynthesis.</title>
        <authorList>
            <person name="Novo Uzal E."/>
            <person name="Gomez Ros L.V."/>
            <person name="Pomar F."/>
            <person name="Bernal M.A."/>
            <person name="Paradela A."/>
            <person name="Albar J.P."/>
            <person name="Ros Barcelo A."/>
        </authorList>
    </citation>
    <scope>PROTEIN SEQUENCE</scope>
    <source>
        <strain>PC-650</strain>
        <tissue>Callus</tissue>
    </source>
</reference>
<protein>
    <recommendedName>
        <fullName>Unknown protein 10</fullName>
    </recommendedName>
</protein>
<accession>P85408</accession>
<organism>
    <name type="scientific">Ginkgo biloba</name>
    <name type="common">Ginkgo</name>
    <name type="synonym">Maidenhair tree</name>
    <dbReference type="NCBI Taxonomy" id="3311"/>
    <lineage>
        <taxon>Eukaryota</taxon>
        <taxon>Viridiplantae</taxon>
        <taxon>Streptophyta</taxon>
        <taxon>Embryophyta</taxon>
        <taxon>Tracheophyta</taxon>
        <taxon>Spermatophyta</taxon>
        <taxon>Ginkgoidae</taxon>
        <taxon>Ginkgoales</taxon>
        <taxon>Ginkgoaceae</taxon>
        <taxon>Ginkgo</taxon>
    </lineage>
</organism>
<sequence length="8" mass="944">SEQQCXXK</sequence>
<proteinExistence type="evidence at protein level"/>
<keyword id="KW-0903">Direct protein sequencing</keyword>
<feature type="chain" id="PRO_0000341523" description="Unknown protein 10">
    <location>
        <begin position="1" status="less than"/>
        <end position="8" status="greater than"/>
    </location>
</feature>
<feature type="unsure residue" description="Q or K">
    <location>
        <position position="3"/>
    </location>
</feature>
<feature type="unsure residue" description="Q or K">
    <location>
        <position position="4"/>
    </location>
</feature>
<feature type="non-terminal residue">
    <location>
        <position position="1"/>
    </location>
</feature>
<feature type="non-terminal residue">
    <location>
        <position position="8"/>
    </location>
</feature>
<name>UP10_GINBI</name>